<sequence length="89" mass="10157">MVPEAPAPFEEPLPPEATDQWQDRALCAQTDPEAFFPEKGGSTREAKKICMGCEVRHECLEYALAHDERFGIWGGLSERERRRLKRGII</sequence>
<comment type="function">
    <text evidence="1">Acts as a transcriptional regulator. Probably redox-responsive. The apo- but not holo-form probably binds DNA (By similarity).</text>
</comment>
<comment type="function">
    <text evidence="3 4">The apo-form functions as a chaperone, preventing aggregation or helping in correct refolding of a number of substrates; this activity does not require ATP or the ability to bind a Fe-S cluster. Chaperone activity is insensitive to the redox state of its cysteine residues. The apo-form has no protein disulfide reductase activity. The apo-form binds to its own promoter.</text>
</comment>
<comment type="cofactor">
    <cofactor evidence="1 5">
        <name>[4Fe-4S] cluster</name>
        <dbReference type="ChEBI" id="CHEBI:49883"/>
    </cofactor>
    <text evidence="1 5">Binds 1 [4Fe-4S] cluster per subunit. Contains 1 [2Fe-2S] cluster after reconstitution of overexpressed protein from E.coli. Following nitrosylation of the [4Fe-4S] cluster binds 1 [4Fe-8(NO)] cluster per subunit.</text>
</comment>
<comment type="subcellular location">
    <subcellularLocation>
        <location evidence="1">Cytoplasm</location>
    </subcellularLocation>
</comment>
<comment type="PTM">
    <text evidence="4">May be phosphorylated, possibly on Ser-42.</text>
</comment>
<comment type="PTM">
    <text>The cluster is degraded quickly in the presence of air. Upon cluster removal intramolecular disulfide bonds are formed.</text>
</comment>
<comment type="PTM">
    <text evidence="1">The Fe-S cluster can be nitrosylated by nitric oxide (NO).</text>
</comment>
<comment type="mass spectrometry" mass="15041.115" method="MALDI" evidence="3">
    <text>Fully oxidized recombinant protein tagged at both termini.</text>
</comment>
<comment type="mass spectrometry" mass="15276.807" method="MALDI" evidence="3">
    <text>Fully reduced recombinant protein tagged at both termini.</text>
</comment>
<comment type="similarity">
    <text evidence="5">Belongs to the WhiB family.</text>
</comment>
<accession>O53353</accession>
<accession>L0TF37</accession>
<protein>
    <recommendedName>
        <fullName>Transcriptional regulator WhiB2</fullName>
    </recommendedName>
    <alternativeName>
        <fullName>Probable chaperone WhiB2</fullName>
    </alternativeName>
</protein>
<organism>
    <name type="scientific">Mycobacterium tuberculosis (strain ATCC 25618 / H37Rv)</name>
    <dbReference type="NCBI Taxonomy" id="83332"/>
    <lineage>
        <taxon>Bacteria</taxon>
        <taxon>Bacillati</taxon>
        <taxon>Actinomycetota</taxon>
        <taxon>Actinomycetes</taxon>
        <taxon>Mycobacteriales</taxon>
        <taxon>Mycobacteriaceae</taxon>
        <taxon>Mycobacterium</taxon>
        <taxon>Mycobacterium tuberculosis complex</taxon>
    </lineage>
</organism>
<gene>
    <name type="primary">whiB2</name>
    <name type="ordered locus">Rv3260c</name>
</gene>
<dbReference type="EMBL" id="AL123456">
    <property type="protein sequence ID" value="CCP46079.1"/>
    <property type="molecule type" value="Genomic_DNA"/>
</dbReference>
<dbReference type="PIR" id="C70847">
    <property type="entry name" value="C70847"/>
</dbReference>
<dbReference type="RefSeq" id="NP_217777.1">
    <property type="nucleotide sequence ID" value="NC_000962.3"/>
</dbReference>
<dbReference type="RefSeq" id="WP_003417079.1">
    <property type="nucleotide sequence ID" value="NC_000962.3"/>
</dbReference>
<dbReference type="SMR" id="O53353"/>
<dbReference type="STRING" id="83332.Rv3260c"/>
<dbReference type="iPTMnet" id="O53353"/>
<dbReference type="PaxDb" id="83332-Rv3260c"/>
<dbReference type="DNASU" id="888687"/>
<dbReference type="GeneID" id="888687"/>
<dbReference type="KEGG" id="mtu:Rv3260c"/>
<dbReference type="KEGG" id="mtv:RVBD_3260c"/>
<dbReference type="PATRIC" id="fig|83332.111.peg.3639"/>
<dbReference type="TubercuList" id="Rv3260c"/>
<dbReference type="eggNOG" id="ENOG5032RUK">
    <property type="taxonomic scope" value="Bacteria"/>
</dbReference>
<dbReference type="InParanoid" id="O53353"/>
<dbReference type="OrthoDB" id="5192305at2"/>
<dbReference type="PhylomeDB" id="O53353"/>
<dbReference type="Proteomes" id="UP000001584">
    <property type="component" value="Chromosome"/>
</dbReference>
<dbReference type="GO" id="GO:0005737">
    <property type="term" value="C:cytoplasm"/>
    <property type="evidence" value="ECO:0007669"/>
    <property type="project" value="UniProtKB-SubCell"/>
</dbReference>
<dbReference type="GO" id="GO:0051539">
    <property type="term" value="F:4 iron, 4 sulfur cluster binding"/>
    <property type="evidence" value="ECO:0000318"/>
    <property type="project" value="GO_Central"/>
</dbReference>
<dbReference type="GO" id="GO:0035731">
    <property type="term" value="F:dinitrosyl-iron complex binding"/>
    <property type="evidence" value="ECO:0007669"/>
    <property type="project" value="UniProtKB-UniRule"/>
</dbReference>
<dbReference type="GO" id="GO:0003677">
    <property type="term" value="F:DNA binding"/>
    <property type="evidence" value="ECO:0000318"/>
    <property type="project" value="GO_Central"/>
</dbReference>
<dbReference type="GO" id="GO:0046872">
    <property type="term" value="F:metal ion binding"/>
    <property type="evidence" value="ECO:0007669"/>
    <property type="project" value="UniProtKB-KW"/>
</dbReference>
<dbReference type="GO" id="GO:0047134">
    <property type="term" value="F:protein-disulfide reductase [NAD(P)H] activity"/>
    <property type="evidence" value="ECO:0000318"/>
    <property type="project" value="GO_Central"/>
</dbReference>
<dbReference type="GO" id="GO:0045454">
    <property type="term" value="P:cell redox homeostasis"/>
    <property type="evidence" value="ECO:0000318"/>
    <property type="project" value="GO_Central"/>
</dbReference>
<dbReference type="GO" id="GO:0045892">
    <property type="term" value="P:negative regulation of DNA-templated transcription"/>
    <property type="evidence" value="ECO:0000318"/>
    <property type="project" value="GO_Central"/>
</dbReference>
<dbReference type="HAMAP" id="MF_01479">
    <property type="entry name" value="WhiB"/>
    <property type="match status" value="1"/>
</dbReference>
<dbReference type="InterPro" id="IPR034768">
    <property type="entry name" value="4FE4S_WBL"/>
</dbReference>
<dbReference type="InterPro" id="IPR003482">
    <property type="entry name" value="Whib"/>
</dbReference>
<dbReference type="PANTHER" id="PTHR38839:SF4">
    <property type="entry name" value="TRANSCRIPTIONAL REGULATOR WHIB"/>
    <property type="match status" value="1"/>
</dbReference>
<dbReference type="PANTHER" id="PTHR38839">
    <property type="entry name" value="TRANSCRIPTIONAL REGULATOR WHID-RELATED"/>
    <property type="match status" value="1"/>
</dbReference>
<dbReference type="Pfam" id="PF02467">
    <property type="entry name" value="Whib"/>
    <property type="match status" value="1"/>
</dbReference>
<dbReference type="PROSITE" id="PS51674">
    <property type="entry name" value="4FE4S_WBL"/>
    <property type="match status" value="1"/>
</dbReference>
<keyword id="KW-0004">4Fe-4S</keyword>
<keyword id="KW-0143">Chaperone</keyword>
<keyword id="KW-0963">Cytoplasm</keyword>
<keyword id="KW-1015">Disulfide bond</keyword>
<keyword id="KW-0238">DNA-binding</keyword>
<keyword id="KW-0408">Iron</keyword>
<keyword id="KW-0411">Iron-sulfur</keyword>
<keyword id="KW-0479">Metal-binding</keyword>
<keyword id="KW-0597">Phosphoprotein</keyword>
<keyword id="KW-1185">Reference proteome</keyword>
<keyword id="KW-0804">Transcription</keyword>
<keyword id="KW-0805">Transcription regulation</keyword>
<feature type="chain" id="PRO_0000420380" description="Transcriptional regulator WhiB2">
    <location>
        <begin position="1"/>
        <end position="89"/>
    </location>
</feature>
<feature type="domain" description="4Fe-4S Wbl-type">
    <location>
        <begin position="26"/>
        <end position="83"/>
    </location>
</feature>
<feature type="region of interest" description="Disordered" evidence="2">
    <location>
        <begin position="1"/>
        <end position="24"/>
    </location>
</feature>
<feature type="compositionally biased region" description="Pro residues" evidence="2">
    <location>
        <begin position="1"/>
        <end position="15"/>
    </location>
</feature>
<feature type="binding site" evidence="1">
    <location>
        <position position="27"/>
    </location>
    <ligand>
        <name>[4Fe-4S] cluster</name>
        <dbReference type="ChEBI" id="CHEBI:49883"/>
    </ligand>
</feature>
<feature type="binding site" evidence="1">
    <location>
        <position position="50"/>
    </location>
    <ligand>
        <name>[4Fe-4S] cluster</name>
        <dbReference type="ChEBI" id="CHEBI:49883"/>
    </ligand>
</feature>
<feature type="binding site" evidence="1">
    <location>
        <position position="53"/>
    </location>
    <ligand>
        <name>[4Fe-4S] cluster</name>
        <dbReference type="ChEBI" id="CHEBI:49883"/>
    </ligand>
</feature>
<feature type="binding site" evidence="1">
    <location>
        <position position="59"/>
    </location>
    <ligand>
        <name>[4Fe-4S] cluster</name>
        <dbReference type="ChEBI" id="CHEBI:49883"/>
    </ligand>
</feature>
<feature type="modified residue" description="Phosphoserine" evidence="6">
    <location>
        <position position="42"/>
    </location>
</feature>
<feature type="mutagenesis site" description="Retains chaperone activity; when associated with A-50, A-53 and A-59." evidence="4">
    <original>C</original>
    <variation>A</variation>
    <location>
        <position position="27"/>
    </location>
</feature>
<feature type="mutagenesis site" description="Considerable loss of chaperone activity." evidence="4">
    <original>S</original>
    <variation>A</variation>
    <location>
        <position position="42"/>
    </location>
</feature>
<feature type="mutagenesis site" description="Retains chaperone activity; when associated with A-27, A-53 and A-59." evidence="4">
    <original>C</original>
    <variation>A</variation>
    <location>
        <position position="50"/>
    </location>
</feature>
<feature type="mutagenesis site" description="Retains chaperone activity; when associated with A-27, A-50 and A-59." evidence="4">
    <original>C</original>
    <variation>A</variation>
    <location>
        <position position="53"/>
    </location>
</feature>
<feature type="mutagenesis site" description="Retains chaperone activity; when associated with A-27, A-50 and A-53." evidence="4">
    <original>C</original>
    <variation>A</variation>
    <location>
        <position position="59"/>
    </location>
</feature>
<reference key="1">
    <citation type="journal article" date="1998" name="Nature">
        <title>Deciphering the biology of Mycobacterium tuberculosis from the complete genome sequence.</title>
        <authorList>
            <person name="Cole S.T."/>
            <person name="Brosch R."/>
            <person name="Parkhill J."/>
            <person name="Garnier T."/>
            <person name="Churcher C.M."/>
            <person name="Harris D.E."/>
            <person name="Gordon S.V."/>
            <person name="Eiglmeier K."/>
            <person name="Gas S."/>
            <person name="Barry C.E. III"/>
            <person name="Tekaia F."/>
            <person name="Badcock K."/>
            <person name="Basham D."/>
            <person name="Brown D."/>
            <person name="Chillingworth T."/>
            <person name="Connor R."/>
            <person name="Davies R.M."/>
            <person name="Devlin K."/>
            <person name="Feltwell T."/>
            <person name="Gentles S."/>
            <person name="Hamlin N."/>
            <person name="Holroyd S."/>
            <person name="Hornsby T."/>
            <person name="Jagels K."/>
            <person name="Krogh A."/>
            <person name="McLean J."/>
            <person name="Moule S."/>
            <person name="Murphy L.D."/>
            <person name="Oliver S."/>
            <person name="Osborne J."/>
            <person name="Quail M.A."/>
            <person name="Rajandream M.A."/>
            <person name="Rogers J."/>
            <person name="Rutter S."/>
            <person name="Seeger K."/>
            <person name="Skelton S."/>
            <person name="Squares S."/>
            <person name="Squares R."/>
            <person name="Sulston J.E."/>
            <person name="Taylor K."/>
            <person name="Whitehead S."/>
            <person name="Barrell B.G."/>
        </authorList>
    </citation>
    <scope>NUCLEOTIDE SEQUENCE [LARGE SCALE GENOMIC DNA]</scope>
    <source>
        <strain>ATCC 25618 / H37Rv</strain>
    </source>
</reference>
<reference key="2">
    <citation type="journal article" date="2009" name="FEBS J.">
        <title>Studies on structural and functional divergence among seven WhiB proteins of Mycobacterium tuberculosis H37Rv.</title>
        <authorList>
            <person name="Alam M.S."/>
            <person name="Garg S.K."/>
            <person name="Agrawal P."/>
        </authorList>
    </citation>
    <scope>FUNCTION</scope>
    <scope>COFACTOR</scope>
    <scope>MASS SPECTROMETRY</scope>
    <scope>DISULFIDE BOND</scope>
    <source>
        <strain>ATCC 25618 / H37Rv</strain>
    </source>
</reference>
<reference key="3">
    <citation type="journal article" date="2010" name="Mol. Microbiol.">
        <title>Insights into the function of the WhiB-like protein of mycobacteriophage TM4--a transcriptional inhibitor of WhiB2.</title>
        <authorList>
            <person name="Rybniker J."/>
            <person name="Nowag A."/>
            <person name="van Gumpel E."/>
            <person name="Nissen N."/>
            <person name="Robinson N."/>
            <person name="Plum G."/>
            <person name="Hartmann P."/>
        </authorList>
    </citation>
    <scope>COFACTOR</scope>
    <scope>DNA-BINDING</scope>
</reference>
<reference key="4">
    <citation type="journal article" date="2012" name="FEBS J.">
        <title>WhiB2/Rv3260c, a cell division-associated protein of Mycobacterium tuberculosis H37Rv, has properties of a chaperone.</title>
        <authorList>
            <person name="Konar M."/>
            <person name="Alam M.S."/>
            <person name="Arora C."/>
            <person name="Agrawal P."/>
        </authorList>
    </citation>
    <scope>FUNCTION AS A CHAPERONE</scope>
    <scope>PHOSPHORYLATION AT SER-42</scope>
    <scope>MUTAGENESIS OF CYS-27; SER-42; CYS-50; CYS-53 AND CYS-59</scope>
    <source>
        <strain>ATCC 25618 / H37Rv</strain>
    </source>
</reference>
<name>WHB2A_MYCTU</name>
<proteinExistence type="evidence at protein level"/>
<evidence type="ECO:0000250" key="1"/>
<evidence type="ECO:0000256" key="2">
    <source>
        <dbReference type="SAM" id="MobiDB-lite"/>
    </source>
</evidence>
<evidence type="ECO:0000269" key="3">
    <source>
    </source>
</evidence>
<evidence type="ECO:0000269" key="4">
    <source>
    </source>
</evidence>
<evidence type="ECO:0000305" key="5"/>
<evidence type="ECO:0000305" key="6">
    <source>
    </source>
</evidence>